<gene>
    <name evidence="1" type="primary">rplT</name>
    <name evidence="1" type="synonym">rpl20</name>
    <name type="ordered locus">UU229</name>
</gene>
<accession>Q9PQR2</accession>
<comment type="function">
    <text evidence="1">Binds directly to 23S ribosomal RNA and is necessary for the in vitro assembly process of the 50S ribosomal subunit. It is not involved in the protein synthesizing functions of that subunit.</text>
</comment>
<comment type="similarity">
    <text evidence="1">Belongs to the bacterial ribosomal protein bL20 family.</text>
</comment>
<keyword id="KW-1185">Reference proteome</keyword>
<keyword id="KW-0687">Ribonucleoprotein</keyword>
<keyword id="KW-0689">Ribosomal protein</keyword>
<keyword id="KW-0694">RNA-binding</keyword>
<keyword id="KW-0699">rRNA-binding</keyword>
<protein>
    <recommendedName>
        <fullName evidence="1">Large ribosomal subunit protein bL20</fullName>
    </recommendedName>
    <alternativeName>
        <fullName evidence="2">50S ribosomal protein L20</fullName>
    </alternativeName>
</protein>
<proteinExistence type="inferred from homology"/>
<reference key="1">
    <citation type="journal article" date="2000" name="Nature">
        <title>The complete sequence of the mucosal pathogen Ureaplasma urealyticum.</title>
        <authorList>
            <person name="Glass J.I."/>
            <person name="Lefkowitz E.J."/>
            <person name="Glass J.S."/>
            <person name="Heiner C.R."/>
            <person name="Chen E.Y."/>
            <person name="Cassell G.H."/>
        </authorList>
    </citation>
    <scope>NUCLEOTIDE SEQUENCE [LARGE SCALE GENOMIC DNA]</scope>
    <source>
        <strain>ATCC 700970</strain>
    </source>
</reference>
<feature type="chain" id="PRO_0000177256" description="Large ribosomal subunit protein bL20">
    <location>
        <begin position="1"/>
        <end position="120"/>
    </location>
</feature>
<organism>
    <name type="scientific">Ureaplasma parvum serovar 3 (strain ATCC 700970)</name>
    <dbReference type="NCBI Taxonomy" id="273119"/>
    <lineage>
        <taxon>Bacteria</taxon>
        <taxon>Bacillati</taxon>
        <taxon>Mycoplasmatota</taxon>
        <taxon>Mycoplasmoidales</taxon>
        <taxon>Mycoplasmoidaceae</taxon>
        <taxon>Ureaplasma</taxon>
    </lineage>
</organism>
<sequence>MRVKGGSVTRQRRKRWLEKAEGSWGTRNTSYRIARQTVIRAAEYAYRDRRNKKRDFRKLWISRINAAVRELGYTYSQFMNALVKANVVTKDGQGLNRKMLSELAINNPEAFNQLVDKVMK</sequence>
<dbReference type="EMBL" id="AF222894">
    <property type="protein sequence ID" value="AAF30638.1"/>
    <property type="molecule type" value="Genomic_DNA"/>
</dbReference>
<dbReference type="RefSeq" id="WP_006688834.1">
    <property type="nucleotide sequence ID" value="NC_002162.1"/>
</dbReference>
<dbReference type="SMR" id="Q9PQR2"/>
<dbReference type="STRING" id="273119.UU229"/>
<dbReference type="EnsemblBacteria" id="AAF30638">
    <property type="protein sequence ID" value="AAF30638"/>
    <property type="gene ID" value="UU229"/>
</dbReference>
<dbReference type="GeneID" id="29672663"/>
<dbReference type="KEGG" id="uur:UU229"/>
<dbReference type="eggNOG" id="COG0292">
    <property type="taxonomic scope" value="Bacteria"/>
</dbReference>
<dbReference type="HOGENOM" id="CLU_123265_0_1_14"/>
<dbReference type="OrthoDB" id="9808966at2"/>
<dbReference type="Proteomes" id="UP000000423">
    <property type="component" value="Chromosome"/>
</dbReference>
<dbReference type="GO" id="GO:1990904">
    <property type="term" value="C:ribonucleoprotein complex"/>
    <property type="evidence" value="ECO:0007669"/>
    <property type="project" value="UniProtKB-KW"/>
</dbReference>
<dbReference type="GO" id="GO:0005840">
    <property type="term" value="C:ribosome"/>
    <property type="evidence" value="ECO:0007669"/>
    <property type="project" value="UniProtKB-KW"/>
</dbReference>
<dbReference type="GO" id="GO:0019843">
    <property type="term" value="F:rRNA binding"/>
    <property type="evidence" value="ECO:0007669"/>
    <property type="project" value="UniProtKB-UniRule"/>
</dbReference>
<dbReference type="GO" id="GO:0003735">
    <property type="term" value="F:structural constituent of ribosome"/>
    <property type="evidence" value="ECO:0007669"/>
    <property type="project" value="InterPro"/>
</dbReference>
<dbReference type="GO" id="GO:0000027">
    <property type="term" value="P:ribosomal large subunit assembly"/>
    <property type="evidence" value="ECO:0007669"/>
    <property type="project" value="UniProtKB-UniRule"/>
</dbReference>
<dbReference type="GO" id="GO:0006412">
    <property type="term" value="P:translation"/>
    <property type="evidence" value="ECO:0007669"/>
    <property type="project" value="InterPro"/>
</dbReference>
<dbReference type="CDD" id="cd07026">
    <property type="entry name" value="Ribosomal_L20"/>
    <property type="match status" value="1"/>
</dbReference>
<dbReference type="FunFam" id="1.10.1900.20:FF:000001">
    <property type="entry name" value="50S ribosomal protein L20"/>
    <property type="match status" value="1"/>
</dbReference>
<dbReference type="Gene3D" id="6.10.160.10">
    <property type="match status" value="1"/>
</dbReference>
<dbReference type="Gene3D" id="1.10.1900.20">
    <property type="entry name" value="Ribosomal protein L20"/>
    <property type="match status" value="1"/>
</dbReference>
<dbReference type="HAMAP" id="MF_00382">
    <property type="entry name" value="Ribosomal_bL20"/>
    <property type="match status" value="1"/>
</dbReference>
<dbReference type="InterPro" id="IPR005813">
    <property type="entry name" value="Ribosomal_bL20"/>
</dbReference>
<dbReference type="InterPro" id="IPR049946">
    <property type="entry name" value="RIBOSOMAL_L20_CS"/>
</dbReference>
<dbReference type="InterPro" id="IPR035566">
    <property type="entry name" value="Ribosomal_protein_bL20_C"/>
</dbReference>
<dbReference type="NCBIfam" id="TIGR01032">
    <property type="entry name" value="rplT_bact"/>
    <property type="match status" value="1"/>
</dbReference>
<dbReference type="PANTHER" id="PTHR10986">
    <property type="entry name" value="39S RIBOSOMAL PROTEIN L20"/>
    <property type="match status" value="1"/>
</dbReference>
<dbReference type="Pfam" id="PF00453">
    <property type="entry name" value="Ribosomal_L20"/>
    <property type="match status" value="1"/>
</dbReference>
<dbReference type="PRINTS" id="PR00062">
    <property type="entry name" value="RIBOSOMALL20"/>
</dbReference>
<dbReference type="SUPFAM" id="SSF74731">
    <property type="entry name" value="Ribosomal protein L20"/>
    <property type="match status" value="1"/>
</dbReference>
<dbReference type="PROSITE" id="PS00937">
    <property type="entry name" value="RIBOSOMAL_L20"/>
    <property type="match status" value="1"/>
</dbReference>
<name>RL20_UREPA</name>
<evidence type="ECO:0000255" key="1">
    <source>
        <dbReference type="HAMAP-Rule" id="MF_00382"/>
    </source>
</evidence>
<evidence type="ECO:0000305" key="2"/>